<accession>Q2YUP1</accession>
<name>DNAA_STAAB</name>
<organism>
    <name type="scientific">Staphylococcus aureus (strain bovine RF122 / ET3-1)</name>
    <dbReference type="NCBI Taxonomy" id="273036"/>
    <lineage>
        <taxon>Bacteria</taxon>
        <taxon>Bacillati</taxon>
        <taxon>Bacillota</taxon>
        <taxon>Bacilli</taxon>
        <taxon>Bacillales</taxon>
        <taxon>Staphylococcaceae</taxon>
        <taxon>Staphylococcus</taxon>
    </lineage>
</organism>
<keyword id="KW-0067">ATP-binding</keyword>
<keyword id="KW-0963">Cytoplasm</keyword>
<keyword id="KW-0235">DNA replication</keyword>
<keyword id="KW-0238">DNA-binding</keyword>
<keyword id="KW-0446">Lipid-binding</keyword>
<keyword id="KW-0547">Nucleotide-binding</keyword>
<protein>
    <recommendedName>
        <fullName evidence="1">Chromosomal replication initiator protein DnaA</fullName>
    </recommendedName>
</protein>
<proteinExistence type="inferred from homology"/>
<feature type="chain" id="PRO_1000048734" description="Chromosomal replication initiator protein DnaA">
    <location>
        <begin position="1"/>
        <end position="453"/>
    </location>
</feature>
<feature type="region of interest" description="Domain I, interacts with DnaA modulators" evidence="1">
    <location>
        <begin position="1"/>
        <end position="71"/>
    </location>
</feature>
<feature type="region of interest" description="Domain II" evidence="1">
    <location>
        <begin position="71"/>
        <end position="114"/>
    </location>
</feature>
<feature type="region of interest" description="Domain III, AAA+ region" evidence="1">
    <location>
        <begin position="115"/>
        <end position="331"/>
    </location>
</feature>
<feature type="region of interest" description="Domain IV, binds dsDNA" evidence="1">
    <location>
        <begin position="332"/>
        <end position="453"/>
    </location>
</feature>
<feature type="binding site" evidence="1">
    <location>
        <position position="159"/>
    </location>
    <ligand>
        <name>ATP</name>
        <dbReference type="ChEBI" id="CHEBI:30616"/>
    </ligand>
</feature>
<feature type="binding site" evidence="1">
    <location>
        <position position="161"/>
    </location>
    <ligand>
        <name>ATP</name>
        <dbReference type="ChEBI" id="CHEBI:30616"/>
    </ligand>
</feature>
<feature type="binding site" evidence="1">
    <location>
        <position position="162"/>
    </location>
    <ligand>
        <name>ATP</name>
        <dbReference type="ChEBI" id="CHEBI:30616"/>
    </ligand>
</feature>
<feature type="binding site" evidence="1">
    <location>
        <position position="163"/>
    </location>
    <ligand>
        <name>ATP</name>
        <dbReference type="ChEBI" id="CHEBI:30616"/>
    </ligand>
</feature>
<reference key="1">
    <citation type="journal article" date="2007" name="PLoS ONE">
        <title>Molecular correlates of host specialization in Staphylococcus aureus.</title>
        <authorList>
            <person name="Herron-Olson L."/>
            <person name="Fitzgerald J.R."/>
            <person name="Musser J.M."/>
            <person name="Kapur V."/>
        </authorList>
    </citation>
    <scope>NUCLEOTIDE SEQUENCE [LARGE SCALE GENOMIC DNA]</scope>
    <source>
        <strain>bovine RF122 / ET3-1</strain>
    </source>
</reference>
<dbReference type="EMBL" id="AJ938182">
    <property type="protein sequence ID" value="CAI79689.1"/>
    <property type="molecule type" value="Genomic_DNA"/>
</dbReference>
<dbReference type="RefSeq" id="WP_001290438.1">
    <property type="nucleotide sequence ID" value="NC_007622.1"/>
</dbReference>
<dbReference type="SMR" id="Q2YUP1"/>
<dbReference type="KEGG" id="sab:SAB0001"/>
<dbReference type="HOGENOM" id="CLU_026910_3_1_9"/>
<dbReference type="GO" id="GO:0005737">
    <property type="term" value="C:cytoplasm"/>
    <property type="evidence" value="ECO:0007669"/>
    <property type="project" value="UniProtKB-SubCell"/>
</dbReference>
<dbReference type="GO" id="GO:0005886">
    <property type="term" value="C:plasma membrane"/>
    <property type="evidence" value="ECO:0007669"/>
    <property type="project" value="TreeGrafter"/>
</dbReference>
<dbReference type="GO" id="GO:0005524">
    <property type="term" value="F:ATP binding"/>
    <property type="evidence" value="ECO:0007669"/>
    <property type="project" value="UniProtKB-UniRule"/>
</dbReference>
<dbReference type="GO" id="GO:0016887">
    <property type="term" value="F:ATP hydrolysis activity"/>
    <property type="evidence" value="ECO:0007669"/>
    <property type="project" value="InterPro"/>
</dbReference>
<dbReference type="GO" id="GO:0003688">
    <property type="term" value="F:DNA replication origin binding"/>
    <property type="evidence" value="ECO:0007669"/>
    <property type="project" value="UniProtKB-UniRule"/>
</dbReference>
<dbReference type="GO" id="GO:0008289">
    <property type="term" value="F:lipid binding"/>
    <property type="evidence" value="ECO:0007669"/>
    <property type="project" value="UniProtKB-KW"/>
</dbReference>
<dbReference type="GO" id="GO:0006270">
    <property type="term" value="P:DNA replication initiation"/>
    <property type="evidence" value="ECO:0007669"/>
    <property type="project" value="UniProtKB-UniRule"/>
</dbReference>
<dbReference type="GO" id="GO:0006275">
    <property type="term" value="P:regulation of DNA replication"/>
    <property type="evidence" value="ECO:0007669"/>
    <property type="project" value="UniProtKB-UniRule"/>
</dbReference>
<dbReference type="CDD" id="cd00009">
    <property type="entry name" value="AAA"/>
    <property type="match status" value="1"/>
</dbReference>
<dbReference type="CDD" id="cd06571">
    <property type="entry name" value="Bac_DnaA_C"/>
    <property type="match status" value="1"/>
</dbReference>
<dbReference type="FunFam" id="1.10.1750.10:FF:000003">
    <property type="entry name" value="Chromosomal replication initiator protein DnaA"/>
    <property type="match status" value="1"/>
</dbReference>
<dbReference type="FunFam" id="1.10.8.60:FF:000003">
    <property type="entry name" value="Chromosomal replication initiator protein DnaA"/>
    <property type="match status" value="1"/>
</dbReference>
<dbReference type="FunFam" id="3.40.50.300:FF:000150">
    <property type="entry name" value="Chromosomal replication initiator protein DnaA"/>
    <property type="match status" value="1"/>
</dbReference>
<dbReference type="Gene3D" id="1.10.1750.10">
    <property type="match status" value="1"/>
</dbReference>
<dbReference type="Gene3D" id="1.10.8.60">
    <property type="match status" value="1"/>
</dbReference>
<dbReference type="Gene3D" id="3.30.300.180">
    <property type="match status" value="1"/>
</dbReference>
<dbReference type="Gene3D" id="3.40.50.300">
    <property type="entry name" value="P-loop containing nucleotide triphosphate hydrolases"/>
    <property type="match status" value="1"/>
</dbReference>
<dbReference type="HAMAP" id="MF_00377">
    <property type="entry name" value="DnaA_bact"/>
    <property type="match status" value="1"/>
</dbReference>
<dbReference type="InterPro" id="IPR003593">
    <property type="entry name" value="AAA+_ATPase"/>
</dbReference>
<dbReference type="InterPro" id="IPR001957">
    <property type="entry name" value="Chromosome_initiator_DnaA"/>
</dbReference>
<dbReference type="InterPro" id="IPR020591">
    <property type="entry name" value="Chromosome_initiator_DnaA-like"/>
</dbReference>
<dbReference type="InterPro" id="IPR018312">
    <property type="entry name" value="Chromosome_initiator_DnaA_CS"/>
</dbReference>
<dbReference type="InterPro" id="IPR013159">
    <property type="entry name" value="DnaA_C"/>
</dbReference>
<dbReference type="InterPro" id="IPR013317">
    <property type="entry name" value="DnaA_dom"/>
</dbReference>
<dbReference type="InterPro" id="IPR024633">
    <property type="entry name" value="DnaA_N_dom"/>
</dbReference>
<dbReference type="InterPro" id="IPR038454">
    <property type="entry name" value="DnaA_N_sf"/>
</dbReference>
<dbReference type="InterPro" id="IPR027417">
    <property type="entry name" value="P-loop_NTPase"/>
</dbReference>
<dbReference type="InterPro" id="IPR010921">
    <property type="entry name" value="Trp_repressor/repl_initiator"/>
</dbReference>
<dbReference type="NCBIfam" id="TIGR00362">
    <property type="entry name" value="DnaA"/>
    <property type="match status" value="1"/>
</dbReference>
<dbReference type="PANTHER" id="PTHR30050">
    <property type="entry name" value="CHROMOSOMAL REPLICATION INITIATOR PROTEIN DNAA"/>
    <property type="match status" value="1"/>
</dbReference>
<dbReference type="PANTHER" id="PTHR30050:SF2">
    <property type="entry name" value="CHROMOSOMAL REPLICATION INITIATOR PROTEIN DNAA"/>
    <property type="match status" value="1"/>
</dbReference>
<dbReference type="Pfam" id="PF00308">
    <property type="entry name" value="Bac_DnaA"/>
    <property type="match status" value="1"/>
</dbReference>
<dbReference type="Pfam" id="PF08299">
    <property type="entry name" value="Bac_DnaA_C"/>
    <property type="match status" value="1"/>
</dbReference>
<dbReference type="Pfam" id="PF11638">
    <property type="entry name" value="DnaA_N"/>
    <property type="match status" value="1"/>
</dbReference>
<dbReference type="PRINTS" id="PR00051">
    <property type="entry name" value="DNAA"/>
</dbReference>
<dbReference type="SMART" id="SM00382">
    <property type="entry name" value="AAA"/>
    <property type="match status" value="1"/>
</dbReference>
<dbReference type="SMART" id="SM00760">
    <property type="entry name" value="Bac_DnaA_C"/>
    <property type="match status" value="1"/>
</dbReference>
<dbReference type="SUPFAM" id="SSF52540">
    <property type="entry name" value="P-loop containing nucleoside triphosphate hydrolases"/>
    <property type="match status" value="1"/>
</dbReference>
<dbReference type="SUPFAM" id="SSF48295">
    <property type="entry name" value="TrpR-like"/>
    <property type="match status" value="1"/>
</dbReference>
<dbReference type="PROSITE" id="PS01008">
    <property type="entry name" value="DNAA"/>
    <property type="match status" value="1"/>
</dbReference>
<sequence>MSEKEIWEKVLKIAQEKLSAVSYSTFLKDTELYTIKDGEAIVLSSIPFNANWLNQQYAEIIQAILFDVVGYEVKPHFITTEELANYSNNETATPKETTKPSTETTEDNHVLGREQFNAHNTFDTFVIGPGNRFPHAASLAVAEAPAKAYNPLFIYGGVGLGKTHLMHAIGHHVLDNNPDAKVIYTSSEKFTNEFIKSIRDNEGEAFRERYRNIDVLLIDDIQFIQNKVQTQEEFFYTFNELHQNNKQIVISSDRPPKEIAQLEDRLRSRFEWGLIVDITPPDYETRMAILQKKIEEEKLDIPPEALNYIANQIQSNIRELEGALTRLLAYSQLLGKPITTELTAEALKDIIQAPKSKKITIQDIQKIVGQYYNVRIEDFSAKKRTKSIAYPRQIAMYLSRELTDFSLPKIGEEFGGRDHTTVIHAHEKISKDLKEDPIFKQEVENLEKEIRNV</sequence>
<comment type="function">
    <text evidence="1">Plays an essential role in the initiation and regulation of chromosomal replication. ATP-DnaA binds to the origin of replication (oriC) to initiate formation of the DNA replication initiation complex once per cell cycle. Binds the DnaA box (a 9 base pair repeat at the origin) and separates the double-stranded (ds)DNA. Forms a right-handed helical filament on oriC DNA; dsDNA binds to the exterior of the filament while single-stranded (ss)DNA is stabiized in the filament's interior. The ATP-DnaA-oriC complex binds and stabilizes one strand of the AT-rich DNA unwinding element (DUE), permitting loading of DNA polymerase. After initiation quickly degrades to an ADP-DnaA complex that is not apt for DNA replication. Binds acidic phospholipids.</text>
</comment>
<comment type="subunit">
    <text evidence="1">Oligomerizes as a right-handed, spiral filament on DNA at oriC.</text>
</comment>
<comment type="subcellular location">
    <subcellularLocation>
        <location evidence="1">Cytoplasm</location>
    </subcellularLocation>
</comment>
<comment type="domain">
    <text evidence="1">Domain I is involved in oligomerization and binding regulators, domain II is flexibile and of varying length in different bacteria, domain III forms the AAA+ region, while domain IV binds dsDNA.</text>
</comment>
<comment type="similarity">
    <text evidence="1">Belongs to the DnaA family.</text>
</comment>
<gene>
    <name evidence="1" type="primary">dnaA</name>
    <name type="ordered locus">SAB0001</name>
</gene>
<evidence type="ECO:0000255" key="1">
    <source>
        <dbReference type="HAMAP-Rule" id="MF_00377"/>
    </source>
</evidence>